<geneLocation type="chloroplast"/>
<feature type="chain" id="PRO_0000277143" description="Photosystem I P700 chlorophyll a apoprotein A2">
    <location>
        <begin position="1"/>
        <end position="733"/>
    </location>
</feature>
<feature type="transmembrane region" description="Helical; Name=I" evidence="1">
    <location>
        <begin position="46"/>
        <end position="69"/>
    </location>
</feature>
<feature type="transmembrane region" description="Helical; Name=II" evidence="1">
    <location>
        <begin position="134"/>
        <end position="157"/>
    </location>
</feature>
<feature type="transmembrane region" description="Helical; Name=III" evidence="1">
    <location>
        <begin position="174"/>
        <end position="198"/>
    </location>
</feature>
<feature type="transmembrane region" description="Helical; Name=IV" evidence="1">
    <location>
        <begin position="272"/>
        <end position="290"/>
    </location>
</feature>
<feature type="transmembrane region" description="Helical; Name=V" evidence="1">
    <location>
        <begin position="329"/>
        <end position="352"/>
    </location>
</feature>
<feature type="transmembrane region" description="Helical; Name=VI" evidence="1">
    <location>
        <begin position="368"/>
        <end position="394"/>
    </location>
</feature>
<feature type="transmembrane region" description="Helical; Name=VII" evidence="1">
    <location>
        <begin position="416"/>
        <end position="438"/>
    </location>
</feature>
<feature type="transmembrane region" description="Helical; Name=VIII" evidence="1">
    <location>
        <begin position="516"/>
        <end position="534"/>
    </location>
</feature>
<feature type="transmembrane region" description="Helical; Name=IX" evidence="1">
    <location>
        <begin position="574"/>
        <end position="595"/>
    </location>
</feature>
<feature type="transmembrane region" description="Helical; Name=X" evidence="1">
    <location>
        <begin position="642"/>
        <end position="664"/>
    </location>
</feature>
<feature type="transmembrane region" description="Helical; Name=XI" evidence="1">
    <location>
        <begin position="706"/>
        <end position="726"/>
    </location>
</feature>
<feature type="binding site" evidence="1">
    <location>
        <position position="558"/>
    </location>
    <ligand>
        <name>[4Fe-4S] cluster</name>
        <dbReference type="ChEBI" id="CHEBI:49883"/>
        <note>ligand shared between dimeric partners</note>
    </ligand>
</feature>
<feature type="binding site" evidence="1">
    <location>
        <position position="567"/>
    </location>
    <ligand>
        <name>[4Fe-4S] cluster</name>
        <dbReference type="ChEBI" id="CHEBI:49883"/>
        <note>ligand shared between dimeric partners</note>
    </ligand>
</feature>
<feature type="binding site" description="axial binding residue" evidence="1">
    <location>
        <position position="653"/>
    </location>
    <ligand>
        <name>chlorophyll a</name>
        <dbReference type="ChEBI" id="CHEBI:58416"/>
        <label>B1</label>
    </ligand>
    <ligandPart>
        <name>Mg</name>
        <dbReference type="ChEBI" id="CHEBI:25107"/>
    </ligandPart>
</feature>
<feature type="binding site" description="axial binding residue" evidence="1">
    <location>
        <position position="661"/>
    </location>
    <ligand>
        <name>chlorophyll a</name>
        <dbReference type="ChEBI" id="CHEBI:58416"/>
        <label>B3</label>
    </ligand>
    <ligandPart>
        <name>Mg</name>
        <dbReference type="ChEBI" id="CHEBI:25107"/>
    </ligandPart>
</feature>
<feature type="binding site" evidence="1">
    <location>
        <position position="669"/>
    </location>
    <ligand>
        <name>chlorophyll a</name>
        <dbReference type="ChEBI" id="CHEBI:58416"/>
        <label>B3</label>
    </ligand>
</feature>
<feature type="binding site" evidence="1">
    <location>
        <position position="670"/>
    </location>
    <ligand>
        <name>phylloquinone</name>
        <dbReference type="ChEBI" id="CHEBI:18067"/>
        <label>B</label>
    </ligand>
</feature>
<feature type="helix" evidence="2">
    <location>
        <begin position="10"/>
        <end position="13"/>
    </location>
</feature>
<feature type="helix" evidence="2">
    <location>
        <begin position="19"/>
        <end position="27"/>
    </location>
</feature>
<feature type="helix" evidence="2">
    <location>
        <begin position="31"/>
        <end position="33"/>
    </location>
</feature>
<feature type="helix" evidence="2">
    <location>
        <begin position="39"/>
        <end position="71"/>
    </location>
</feature>
<feature type="helix" evidence="2">
    <location>
        <begin position="74"/>
        <end position="79"/>
    </location>
</feature>
<feature type="helix" evidence="2">
    <location>
        <begin position="81"/>
        <end position="83"/>
    </location>
</feature>
<feature type="strand" evidence="2">
    <location>
        <begin position="87"/>
        <end position="90"/>
    </location>
</feature>
<feature type="helix" evidence="2">
    <location>
        <begin position="98"/>
        <end position="104"/>
    </location>
</feature>
<feature type="turn" evidence="2">
    <location>
        <begin position="105"/>
        <end position="107"/>
    </location>
</feature>
<feature type="strand" evidence="2">
    <location>
        <begin position="108"/>
        <end position="110"/>
    </location>
</feature>
<feature type="strand" evidence="2">
    <location>
        <begin position="112"/>
        <end position="114"/>
    </location>
</feature>
<feature type="helix" evidence="2">
    <location>
        <begin position="119"/>
        <end position="125"/>
    </location>
</feature>
<feature type="helix" evidence="2">
    <location>
        <begin position="131"/>
        <end position="154"/>
    </location>
</feature>
<feature type="turn" evidence="2">
    <location>
        <begin position="158"/>
        <end position="160"/>
    </location>
</feature>
<feature type="helix" evidence="2">
    <location>
        <begin position="164"/>
        <end position="167"/>
    </location>
</feature>
<feature type="helix" evidence="2">
    <location>
        <begin position="170"/>
        <end position="179"/>
    </location>
</feature>
<feature type="turn" evidence="2">
    <location>
        <begin position="180"/>
        <end position="182"/>
    </location>
</feature>
<feature type="helix" evidence="2">
    <location>
        <begin position="183"/>
        <end position="195"/>
    </location>
</feature>
<feature type="helix" evidence="2">
    <location>
        <begin position="197"/>
        <end position="201"/>
    </location>
</feature>
<feature type="turn" evidence="2">
    <location>
        <begin position="208"/>
        <end position="210"/>
    </location>
</feature>
<feature type="helix" evidence="2">
    <location>
        <begin position="211"/>
        <end position="213"/>
    </location>
</feature>
<feature type="turn" evidence="2">
    <location>
        <begin position="218"/>
        <end position="221"/>
    </location>
</feature>
<feature type="helix" evidence="2">
    <location>
        <begin position="222"/>
        <end position="226"/>
    </location>
</feature>
<feature type="helix" evidence="2">
    <location>
        <begin position="229"/>
        <end position="232"/>
    </location>
</feature>
<feature type="turn" evidence="2">
    <location>
        <begin position="262"/>
        <end position="264"/>
    </location>
</feature>
<feature type="helix" evidence="2">
    <location>
        <begin position="269"/>
        <end position="286"/>
    </location>
</feature>
<feature type="strand" evidence="2">
    <location>
        <begin position="292"/>
        <end position="295"/>
    </location>
</feature>
<feature type="helix" evidence="2">
    <location>
        <begin position="300"/>
        <end position="306"/>
    </location>
</feature>
<feature type="turn" evidence="2">
    <location>
        <begin position="313"/>
        <end position="316"/>
    </location>
</feature>
<feature type="turn" evidence="2">
    <location>
        <begin position="318"/>
        <end position="320"/>
    </location>
</feature>
<feature type="helix" evidence="2">
    <location>
        <begin position="321"/>
        <end position="327"/>
    </location>
</feature>
<feature type="helix" evidence="2">
    <location>
        <begin position="329"/>
        <end position="353"/>
    </location>
</feature>
<feature type="helix" evidence="2">
    <location>
        <begin position="360"/>
        <end position="362"/>
    </location>
</feature>
<feature type="helix" evidence="2">
    <location>
        <begin position="364"/>
        <end position="395"/>
    </location>
</feature>
<feature type="turn" evidence="2">
    <location>
        <begin position="399"/>
        <end position="404"/>
    </location>
</feature>
<feature type="helix" evidence="2">
    <location>
        <begin position="406"/>
        <end position="412"/>
    </location>
</feature>
<feature type="helix" evidence="2">
    <location>
        <begin position="414"/>
        <end position="444"/>
    </location>
</feature>
<feature type="helix" evidence="2">
    <location>
        <begin position="448"/>
        <end position="450"/>
    </location>
</feature>
<feature type="helix" evidence="2">
    <location>
        <begin position="457"/>
        <end position="465"/>
    </location>
</feature>
<feature type="helix" evidence="2">
    <location>
        <begin position="476"/>
        <end position="478"/>
    </location>
</feature>
<feature type="helix" evidence="2">
    <location>
        <begin position="483"/>
        <end position="488"/>
    </location>
</feature>
<feature type="turn" evidence="2">
    <location>
        <begin position="489"/>
        <end position="492"/>
    </location>
</feature>
<feature type="helix" evidence="2">
    <location>
        <begin position="493"/>
        <end position="500"/>
    </location>
</feature>
<feature type="helix" evidence="2">
    <location>
        <begin position="513"/>
        <end position="538"/>
    </location>
</feature>
<feature type="helix" evidence="2">
    <location>
        <begin position="549"/>
        <end position="552"/>
    </location>
</feature>
<feature type="helix" evidence="2">
    <location>
        <begin position="571"/>
        <end position="601"/>
    </location>
</feature>
<feature type="helix" evidence="2">
    <location>
        <begin position="605"/>
        <end position="611"/>
    </location>
</feature>
<feature type="helix" evidence="2">
    <location>
        <begin position="615"/>
        <end position="621"/>
    </location>
</feature>
<feature type="helix" evidence="2">
    <location>
        <begin position="623"/>
        <end position="626"/>
    </location>
</feature>
<feature type="helix" evidence="2">
    <location>
        <begin position="628"/>
        <end position="631"/>
    </location>
</feature>
<feature type="strand" evidence="2">
    <location>
        <begin position="633"/>
        <end position="635"/>
    </location>
</feature>
<feature type="helix" evidence="2">
    <location>
        <begin position="643"/>
        <end position="664"/>
    </location>
</feature>
<feature type="helix" evidence="2">
    <location>
        <begin position="667"/>
        <end position="682"/>
    </location>
</feature>
<feature type="turn" evidence="2">
    <location>
        <begin position="685"/>
        <end position="689"/>
    </location>
</feature>
<feature type="strand" evidence="2">
    <location>
        <begin position="693"/>
        <end position="695"/>
    </location>
</feature>
<feature type="helix" evidence="2">
    <location>
        <begin position="701"/>
        <end position="731"/>
    </location>
</feature>
<comment type="function">
    <text evidence="1">PsaA and PsaB bind P700, the primary electron donor of photosystem I (PSI), as well as the electron acceptors A0, A1 and FX. PSI is a plastocyanin/cytochrome c6-ferredoxin oxidoreductase, converting photonic excitation into a charge separation, which transfers an electron from the donor P700 chlorophyll pair to the spectroscopically characterized acceptors A0, A1, FX, FA and FB in turn. Oxidized P700 is reduced on the lumenal side of the thylakoid membrane by plastocyanin or cytochrome c6.</text>
</comment>
<comment type="catalytic activity">
    <reaction evidence="1">
        <text>reduced [plastocyanin] + hnu + oxidized [2Fe-2S]-[ferredoxin] = oxidized [plastocyanin] + reduced [2Fe-2S]-[ferredoxin]</text>
        <dbReference type="Rhea" id="RHEA:30407"/>
        <dbReference type="Rhea" id="RHEA-COMP:10000"/>
        <dbReference type="Rhea" id="RHEA-COMP:10001"/>
        <dbReference type="Rhea" id="RHEA-COMP:10039"/>
        <dbReference type="Rhea" id="RHEA-COMP:10040"/>
        <dbReference type="ChEBI" id="CHEBI:29036"/>
        <dbReference type="ChEBI" id="CHEBI:30212"/>
        <dbReference type="ChEBI" id="CHEBI:33737"/>
        <dbReference type="ChEBI" id="CHEBI:33738"/>
        <dbReference type="ChEBI" id="CHEBI:49552"/>
        <dbReference type="EC" id="1.97.1.12"/>
    </reaction>
</comment>
<comment type="cofactor">
    <text evidence="1">P700 is a chlorophyll a/chlorophyll a' dimer, A0 is one or more chlorophyll a, A1 is one or both phylloquinones and FX is a shared 4Fe-4S iron-sulfur center.</text>
</comment>
<comment type="subunit">
    <text evidence="1">The PsaA/B heterodimer binds the P700 chlorophyll special pair and subsequent electron acceptors. PSI consists of a core antenna complex that captures photons, and an electron transfer chain that converts photonic excitation into a charge separation. The eukaryotic PSI reaction center is composed of at least 11 subunits.</text>
</comment>
<comment type="subcellular location">
    <subcellularLocation>
        <location>Plastid</location>
        <location>Chloroplast thylakoid membrane</location>
        <topology>Multi-pass membrane protein</topology>
    </subcellularLocation>
</comment>
<comment type="similarity">
    <text evidence="1">Belongs to the PsaA/PsaB family.</text>
</comment>
<evidence type="ECO:0000255" key="1">
    <source>
        <dbReference type="HAMAP-Rule" id="MF_00482"/>
    </source>
</evidence>
<evidence type="ECO:0007829" key="2">
    <source>
        <dbReference type="PDB" id="8XLS"/>
    </source>
</evidence>
<keyword id="KW-0002">3D-structure</keyword>
<keyword id="KW-0004">4Fe-4S</keyword>
<keyword id="KW-0148">Chlorophyll</keyword>
<keyword id="KW-0150">Chloroplast</keyword>
<keyword id="KW-0157">Chromophore</keyword>
<keyword id="KW-0249">Electron transport</keyword>
<keyword id="KW-0408">Iron</keyword>
<keyword id="KW-0411">Iron-sulfur</keyword>
<keyword id="KW-0460">Magnesium</keyword>
<keyword id="KW-0472">Membrane</keyword>
<keyword id="KW-0479">Metal-binding</keyword>
<keyword id="KW-0560">Oxidoreductase</keyword>
<keyword id="KW-0602">Photosynthesis</keyword>
<keyword id="KW-0603">Photosystem I</keyword>
<keyword id="KW-0934">Plastid</keyword>
<keyword id="KW-0793">Thylakoid</keyword>
<keyword id="KW-0812">Transmembrane</keyword>
<keyword id="KW-1133">Transmembrane helix</keyword>
<keyword id="KW-0813">Transport</keyword>
<name>PSAB_THAPS</name>
<reference key="1">
    <citation type="journal article" date="2007" name="Mol. Genet. Genomics">
        <title>Chloroplast genomes of the diatoms Phaeodactylum tricornutum and Thalassiosira pseudonana: comparison with other plastid genomes of the red lineage.</title>
        <authorList>
            <person name="Oudot-Le Secq M.-P."/>
            <person name="Grimwood J."/>
            <person name="Shapiro H."/>
            <person name="Armbrust E.V."/>
            <person name="Bowler C."/>
            <person name="Green B.R."/>
        </authorList>
    </citation>
    <scope>NUCLEOTIDE SEQUENCE [LARGE SCALE GENOMIC DNA]</scope>
    <source>
        <strain>CCMP1335 / NEPCC58 / CCAP 1085/12</strain>
    </source>
</reference>
<accession>A0T0M9</accession>
<proteinExistence type="evidence at protein level"/>
<organism>
    <name type="scientific">Thalassiosira pseudonana</name>
    <name type="common">Marine diatom</name>
    <name type="synonym">Cyclotella nana</name>
    <dbReference type="NCBI Taxonomy" id="35128"/>
    <lineage>
        <taxon>Eukaryota</taxon>
        <taxon>Sar</taxon>
        <taxon>Stramenopiles</taxon>
        <taxon>Ochrophyta</taxon>
        <taxon>Bacillariophyta</taxon>
        <taxon>Coscinodiscophyceae</taxon>
        <taxon>Thalassiosirophycidae</taxon>
        <taxon>Thalassiosirales</taxon>
        <taxon>Thalassiosiraceae</taxon>
        <taxon>Thalassiosira</taxon>
    </lineage>
</organism>
<sequence>MATKFPKFSQALAQDPATRRIWYGIATAHDLEAHDGMTEENLYQKIFASHFGHLAIIFLWTSGNLFHVAWQGNFEKWVSNPLKTRPIAHSIWDPHFGESALKAFSKGNTYPVNITFSGLYQWWYTIGFRTNQELYKGSIGLLLLASVLLIAGWLHLQPKFRPSLSWFKNNESRLNHHLSGLLGFSSLAWTGHLVHVAIPASRGVHVGWDNFLTTPPHPAGLTPFFTGNWTVYAENPDSATHVFNTSEGSGTAILTFLGGFHPQTQSLWLSDMAHHHLAIAVVFIVAGHMYRTNFGIGHNMKEILDAHRPPGGRLGAGHVGLFETITNSLHMQLGLALACLGVATSLTAQHMYALTPYAYLSKDFTTEAALYTHHQYIAGFLMVGAFAHGAIFFVRDYDPELNKNNVLARMLEHKEAIISHLSWASLFLGFHTLGLYIHNDTVVAFGQPEKQILFEPLFAEYIQAASGKAVYQFNVLLASSTSPATAAGNQVWLPGWLEAINNPKTDLFLKIGPGDFLVHHAIALGLHVTALILVKGALDARGSKLMPDKKDFGYSFPCDGPGRGGTCDISAWDAFYLAMFWMLNTIGWVTFYWHWKHMTIWGGNPGQFDESSNYIMGWLRDYLWLNSSPLINGYNPFGMNNLSVWSWMFLFGHLIWATGFMFLISWRGYWQELIETLVWAHERTPLANLIRWRDKPVALSIVQARLVGLVHFSVGYILTYAAFVIASTSGKFA</sequence>
<gene>
    <name evidence="1" type="primary">psaB</name>
</gene>
<dbReference type="EC" id="1.97.1.12" evidence="1"/>
<dbReference type="EMBL" id="EF067921">
    <property type="protein sequence ID" value="ABK20714.1"/>
    <property type="molecule type" value="Genomic_DNA"/>
</dbReference>
<dbReference type="RefSeq" id="YP_874491.1">
    <property type="nucleotide sequence ID" value="NC_008589.1"/>
</dbReference>
<dbReference type="PDB" id="8XLS">
    <property type="method" value="EM"/>
    <property type="resolution" value="2.30 A"/>
    <property type="chains" value="B=1-733"/>
</dbReference>
<dbReference type="PDB" id="8ZEH">
    <property type="method" value="EM"/>
    <property type="resolution" value="2.78 A"/>
    <property type="chains" value="b=2-733"/>
</dbReference>
<dbReference type="PDB" id="8ZET">
    <property type="method" value="EM"/>
    <property type="resolution" value="3.20 A"/>
    <property type="chains" value="b=2-733"/>
</dbReference>
<dbReference type="PDBsum" id="8XLS"/>
<dbReference type="PDBsum" id="8ZEH"/>
<dbReference type="PDBsum" id="8ZET"/>
<dbReference type="EMDB" id="EMD-38457"/>
<dbReference type="EMDB" id="EMD-60032"/>
<dbReference type="EMDB" id="EMD-60044"/>
<dbReference type="SMR" id="A0T0M9"/>
<dbReference type="STRING" id="35128.A0T0M9"/>
<dbReference type="PaxDb" id="35128-Thapsdraft1611"/>
<dbReference type="GeneID" id="4524814"/>
<dbReference type="eggNOG" id="ENOG502QRYE">
    <property type="taxonomic scope" value="Eukaryota"/>
</dbReference>
<dbReference type="InParanoid" id="A0T0M9"/>
<dbReference type="OMA" id="EQWVADP"/>
<dbReference type="GO" id="GO:0009535">
    <property type="term" value="C:chloroplast thylakoid membrane"/>
    <property type="evidence" value="ECO:0007669"/>
    <property type="project" value="UniProtKB-SubCell"/>
</dbReference>
<dbReference type="GO" id="GO:0009522">
    <property type="term" value="C:photosystem I"/>
    <property type="evidence" value="ECO:0007669"/>
    <property type="project" value="UniProtKB-KW"/>
</dbReference>
<dbReference type="GO" id="GO:0051539">
    <property type="term" value="F:4 iron, 4 sulfur cluster binding"/>
    <property type="evidence" value="ECO:0007669"/>
    <property type="project" value="UniProtKB-KW"/>
</dbReference>
<dbReference type="GO" id="GO:0016168">
    <property type="term" value="F:chlorophyll binding"/>
    <property type="evidence" value="ECO:0007669"/>
    <property type="project" value="UniProtKB-KW"/>
</dbReference>
<dbReference type="GO" id="GO:0009055">
    <property type="term" value="F:electron transfer activity"/>
    <property type="evidence" value="ECO:0007669"/>
    <property type="project" value="UniProtKB-UniRule"/>
</dbReference>
<dbReference type="GO" id="GO:0000287">
    <property type="term" value="F:magnesium ion binding"/>
    <property type="evidence" value="ECO:0007669"/>
    <property type="project" value="UniProtKB-UniRule"/>
</dbReference>
<dbReference type="GO" id="GO:0016491">
    <property type="term" value="F:oxidoreductase activity"/>
    <property type="evidence" value="ECO:0007669"/>
    <property type="project" value="UniProtKB-KW"/>
</dbReference>
<dbReference type="GO" id="GO:0015979">
    <property type="term" value="P:photosynthesis"/>
    <property type="evidence" value="ECO:0007669"/>
    <property type="project" value="UniProtKB-UniRule"/>
</dbReference>
<dbReference type="FunFam" id="1.20.1130.10:FF:000001">
    <property type="entry name" value="Photosystem I P700 chlorophyll a apoprotein A2"/>
    <property type="match status" value="1"/>
</dbReference>
<dbReference type="Gene3D" id="1.20.1130.10">
    <property type="entry name" value="Photosystem I PsaA/PsaB"/>
    <property type="match status" value="1"/>
</dbReference>
<dbReference type="HAMAP" id="MF_00482">
    <property type="entry name" value="PSI_PsaB"/>
    <property type="match status" value="1"/>
</dbReference>
<dbReference type="InterPro" id="IPR001280">
    <property type="entry name" value="PSI_PsaA/B"/>
</dbReference>
<dbReference type="InterPro" id="IPR020586">
    <property type="entry name" value="PSI_PsaA/B_CS"/>
</dbReference>
<dbReference type="InterPro" id="IPR036408">
    <property type="entry name" value="PSI_PsaA/B_sf"/>
</dbReference>
<dbReference type="InterPro" id="IPR006244">
    <property type="entry name" value="PSI_PsaB"/>
</dbReference>
<dbReference type="NCBIfam" id="TIGR01336">
    <property type="entry name" value="psaB"/>
    <property type="match status" value="1"/>
</dbReference>
<dbReference type="PANTHER" id="PTHR30128">
    <property type="entry name" value="OUTER MEMBRANE PROTEIN, OMPA-RELATED"/>
    <property type="match status" value="1"/>
</dbReference>
<dbReference type="PANTHER" id="PTHR30128:SF19">
    <property type="entry name" value="PHOTOSYSTEM I P700 CHLOROPHYLL A APOPROTEIN A1-RELATED"/>
    <property type="match status" value="1"/>
</dbReference>
<dbReference type="Pfam" id="PF00223">
    <property type="entry name" value="PsaA_PsaB"/>
    <property type="match status" value="1"/>
</dbReference>
<dbReference type="PIRSF" id="PIRSF002905">
    <property type="entry name" value="PSI_A"/>
    <property type="match status" value="1"/>
</dbReference>
<dbReference type="PRINTS" id="PR00257">
    <property type="entry name" value="PHOTSYSPSAAB"/>
</dbReference>
<dbReference type="SUPFAM" id="SSF81558">
    <property type="entry name" value="Photosystem I subunits PsaA/PsaB"/>
    <property type="match status" value="1"/>
</dbReference>
<dbReference type="PROSITE" id="PS00419">
    <property type="entry name" value="PHOTOSYSTEM_I_PSAAB"/>
    <property type="match status" value="1"/>
</dbReference>
<protein>
    <recommendedName>
        <fullName evidence="1">Photosystem I P700 chlorophyll a apoprotein A2</fullName>
        <ecNumber evidence="1">1.97.1.12</ecNumber>
    </recommendedName>
    <alternativeName>
        <fullName evidence="1">PSI-B</fullName>
    </alternativeName>
    <alternativeName>
        <fullName evidence="1">PsaB</fullName>
    </alternativeName>
</protein>